<organism>
    <name type="scientific">Shigella sonnei (strain Ss046)</name>
    <dbReference type="NCBI Taxonomy" id="300269"/>
    <lineage>
        <taxon>Bacteria</taxon>
        <taxon>Pseudomonadati</taxon>
        <taxon>Pseudomonadota</taxon>
        <taxon>Gammaproteobacteria</taxon>
        <taxon>Enterobacterales</taxon>
        <taxon>Enterobacteriaceae</taxon>
        <taxon>Shigella</taxon>
    </lineage>
</organism>
<gene>
    <name evidence="1" type="primary">rbsA</name>
    <name type="ordered locus">SSON_3919</name>
</gene>
<reference key="1">
    <citation type="journal article" date="2005" name="Nucleic Acids Res.">
        <title>Genome dynamics and diversity of Shigella species, the etiologic agents of bacillary dysentery.</title>
        <authorList>
            <person name="Yang F."/>
            <person name="Yang J."/>
            <person name="Zhang X."/>
            <person name="Chen L."/>
            <person name="Jiang Y."/>
            <person name="Yan Y."/>
            <person name="Tang X."/>
            <person name="Wang J."/>
            <person name="Xiong Z."/>
            <person name="Dong J."/>
            <person name="Xue Y."/>
            <person name="Zhu Y."/>
            <person name="Xu X."/>
            <person name="Sun L."/>
            <person name="Chen S."/>
            <person name="Nie H."/>
            <person name="Peng J."/>
            <person name="Xu J."/>
            <person name="Wang Y."/>
            <person name="Yuan Z."/>
            <person name="Wen Y."/>
            <person name="Yao Z."/>
            <person name="Shen Y."/>
            <person name="Qiang B."/>
            <person name="Hou Y."/>
            <person name="Yu J."/>
            <person name="Jin Q."/>
        </authorList>
    </citation>
    <scope>NUCLEOTIDE SEQUENCE [LARGE SCALE GENOMIC DNA]</scope>
    <source>
        <strain>Ss046</strain>
    </source>
</reference>
<dbReference type="EC" id="7.5.2.7" evidence="1"/>
<dbReference type="EMBL" id="CP000038">
    <property type="protein sequence ID" value="AAZ90454.1"/>
    <property type="molecule type" value="Genomic_DNA"/>
</dbReference>
<dbReference type="RefSeq" id="WP_000387744.1">
    <property type="nucleotide sequence ID" value="NC_007384.1"/>
</dbReference>
<dbReference type="SMR" id="Q3YVK8"/>
<dbReference type="GeneID" id="93778200"/>
<dbReference type="KEGG" id="ssn:SSON_3919"/>
<dbReference type="HOGENOM" id="CLU_000604_92_3_6"/>
<dbReference type="Proteomes" id="UP000002529">
    <property type="component" value="Chromosome"/>
</dbReference>
<dbReference type="GO" id="GO:0005886">
    <property type="term" value="C:plasma membrane"/>
    <property type="evidence" value="ECO:0007669"/>
    <property type="project" value="UniProtKB-SubCell"/>
</dbReference>
<dbReference type="GO" id="GO:0015611">
    <property type="term" value="F:ABC-type D-ribose transporter activity"/>
    <property type="evidence" value="ECO:0007669"/>
    <property type="project" value="UniProtKB-EC"/>
</dbReference>
<dbReference type="GO" id="GO:0005524">
    <property type="term" value="F:ATP binding"/>
    <property type="evidence" value="ECO:0007669"/>
    <property type="project" value="UniProtKB-KW"/>
</dbReference>
<dbReference type="GO" id="GO:0016887">
    <property type="term" value="F:ATP hydrolysis activity"/>
    <property type="evidence" value="ECO:0007669"/>
    <property type="project" value="InterPro"/>
</dbReference>
<dbReference type="CDD" id="cd03216">
    <property type="entry name" value="ABC_Carb_Monos_I"/>
    <property type="match status" value="1"/>
</dbReference>
<dbReference type="CDD" id="cd03215">
    <property type="entry name" value="ABC_Carb_Monos_II"/>
    <property type="match status" value="1"/>
</dbReference>
<dbReference type="FunFam" id="3.40.50.300:FF:000126">
    <property type="entry name" value="Galactose/methyl galactoside import ATP-binding protein MglA"/>
    <property type="match status" value="1"/>
</dbReference>
<dbReference type="FunFam" id="3.40.50.300:FF:000127">
    <property type="entry name" value="Ribose import ATP-binding protein RbsA"/>
    <property type="match status" value="1"/>
</dbReference>
<dbReference type="Gene3D" id="3.40.50.300">
    <property type="entry name" value="P-loop containing nucleotide triphosphate hydrolases"/>
    <property type="match status" value="2"/>
</dbReference>
<dbReference type="InterPro" id="IPR003593">
    <property type="entry name" value="AAA+_ATPase"/>
</dbReference>
<dbReference type="InterPro" id="IPR050107">
    <property type="entry name" value="ABC_carbohydrate_import_ATPase"/>
</dbReference>
<dbReference type="InterPro" id="IPR003439">
    <property type="entry name" value="ABC_transporter-like_ATP-bd"/>
</dbReference>
<dbReference type="InterPro" id="IPR017871">
    <property type="entry name" value="ABC_transporter-like_CS"/>
</dbReference>
<dbReference type="InterPro" id="IPR027417">
    <property type="entry name" value="P-loop_NTPase"/>
</dbReference>
<dbReference type="NCBIfam" id="NF008030">
    <property type="entry name" value="PRK10762.1"/>
    <property type="match status" value="1"/>
</dbReference>
<dbReference type="PANTHER" id="PTHR43790">
    <property type="entry name" value="CARBOHYDRATE TRANSPORT ATP-BINDING PROTEIN MG119-RELATED"/>
    <property type="match status" value="1"/>
</dbReference>
<dbReference type="PANTHER" id="PTHR43790:SF3">
    <property type="entry name" value="D-ALLOSE IMPORT ATP-BINDING PROTEIN ALSA-RELATED"/>
    <property type="match status" value="1"/>
</dbReference>
<dbReference type="Pfam" id="PF00005">
    <property type="entry name" value="ABC_tran"/>
    <property type="match status" value="2"/>
</dbReference>
<dbReference type="SMART" id="SM00382">
    <property type="entry name" value="AAA"/>
    <property type="match status" value="2"/>
</dbReference>
<dbReference type="SUPFAM" id="SSF52540">
    <property type="entry name" value="P-loop containing nucleoside triphosphate hydrolases"/>
    <property type="match status" value="2"/>
</dbReference>
<dbReference type="PROSITE" id="PS00211">
    <property type="entry name" value="ABC_TRANSPORTER_1"/>
    <property type="match status" value="1"/>
</dbReference>
<dbReference type="PROSITE" id="PS50893">
    <property type="entry name" value="ABC_TRANSPORTER_2"/>
    <property type="match status" value="1"/>
</dbReference>
<dbReference type="PROSITE" id="PS51254">
    <property type="entry name" value="RBSA"/>
    <property type="match status" value="1"/>
</dbReference>
<protein>
    <recommendedName>
        <fullName evidence="1">Ribose import ATP-binding protein RbsA</fullName>
        <ecNumber evidence="1">7.5.2.7</ecNumber>
    </recommendedName>
</protein>
<accession>Q3YVK8</accession>
<name>RBSA_SHISS</name>
<proteinExistence type="inferred from homology"/>
<sequence>MEALLQLKGIDKAFPGVKALSGAALNVYPGRVIALVGENGAGKSTMMKVLTGIYTRDAGTLLWLGKETTFTGPKSSQEAGIGIIHQELNLIPQLTIAENIFLGREFVNRFGKIDWKTMYAEADKLLAKLNLCFKSDKLVGDLSIGDQQMVEIAKVLSFESKVIIMDEPTDALTDTETESLFRVIRELKSQGRGIVYISHRMKEIFEICDDVTVFRDGQFIAEREVASLTEDSLIEMMVGRKLEDQYPHLDKAPGDIRLKVDNLCGPGVNDVSFTLRKGEILGVSGLMGAGRTELMKVLYGAQPRTSGYVTLDGHEVVTRSPQDGLANGIVYISEDRKRDGLVLGMSVKENMSLTALRYFSRAGGSLKHADEQQAVSDFIRLFNVKTPSMEQAIGLLSGGNQQKVAIARGLMTRPKVLILDEPTRGVDVGAKKEIYQLINQFKADGLSIILVSSEMPEVLGMSDRIIVMHEGHLSGEFTREQATQEVLMAAAVGKLNRVNQE</sequence>
<comment type="function">
    <text evidence="1">Part of the ABC transporter complex RbsABC involved in ribose import. Responsible for energy coupling to the transport system.</text>
</comment>
<comment type="catalytic activity">
    <reaction evidence="1">
        <text>D-ribose(out) + ATP + H2O = D-ribose(in) + ADP + phosphate + H(+)</text>
        <dbReference type="Rhea" id="RHEA:29903"/>
        <dbReference type="ChEBI" id="CHEBI:15377"/>
        <dbReference type="ChEBI" id="CHEBI:15378"/>
        <dbReference type="ChEBI" id="CHEBI:30616"/>
        <dbReference type="ChEBI" id="CHEBI:43474"/>
        <dbReference type="ChEBI" id="CHEBI:47013"/>
        <dbReference type="ChEBI" id="CHEBI:456216"/>
        <dbReference type="EC" id="7.5.2.7"/>
    </reaction>
</comment>
<comment type="subunit">
    <text evidence="1">The complex is composed of an ATP-binding protein (RbsA), two transmembrane proteins (RbsC) and a solute-binding protein (RbsB).</text>
</comment>
<comment type="subcellular location">
    <subcellularLocation>
        <location evidence="1">Cell inner membrane</location>
        <topology evidence="1">Peripheral membrane protein</topology>
    </subcellularLocation>
</comment>
<comment type="similarity">
    <text evidence="1">Belongs to the ABC transporter superfamily. Ribose importer (TC 3.A.1.2.1) family.</text>
</comment>
<keyword id="KW-0067">ATP-binding</keyword>
<keyword id="KW-0997">Cell inner membrane</keyword>
<keyword id="KW-1003">Cell membrane</keyword>
<keyword id="KW-0472">Membrane</keyword>
<keyword id="KW-0547">Nucleotide-binding</keyword>
<keyword id="KW-1185">Reference proteome</keyword>
<keyword id="KW-0677">Repeat</keyword>
<keyword id="KW-0762">Sugar transport</keyword>
<keyword id="KW-1278">Translocase</keyword>
<keyword id="KW-0813">Transport</keyword>
<feature type="chain" id="PRO_0000261103" description="Ribose import ATP-binding protein RbsA">
    <location>
        <begin position="1"/>
        <end position="501"/>
    </location>
</feature>
<feature type="domain" description="ABC transporter 1" evidence="1">
    <location>
        <begin position="5"/>
        <end position="241"/>
    </location>
</feature>
<feature type="domain" description="ABC transporter 2" evidence="1">
    <location>
        <begin position="252"/>
        <end position="495"/>
    </location>
</feature>
<feature type="binding site" evidence="1">
    <location>
        <begin position="37"/>
        <end position="44"/>
    </location>
    <ligand>
        <name>ATP</name>
        <dbReference type="ChEBI" id="CHEBI:30616"/>
    </ligand>
</feature>
<evidence type="ECO:0000255" key="1">
    <source>
        <dbReference type="HAMAP-Rule" id="MF_01716"/>
    </source>
</evidence>